<gene>
    <name type="ordered locus">BQ2027_MB1862</name>
</gene>
<organism>
    <name type="scientific">Mycobacterium bovis (strain ATCC BAA-935 / AF2122/97)</name>
    <dbReference type="NCBI Taxonomy" id="233413"/>
    <lineage>
        <taxon>Bacteria</taxon>
        <taxon>Bacillati</taxon>
        <taxon>Actinomycetota</taxon>
        <taxon>Actinomycetes</taxon>
        <taxon>Mycobacteriales</taxon>
        <taxon>Mycobacteriaceae</taxon>
        <taxon>Mycobacterium</taxon>
        <taxon>Mycobacterium tuberculosis complex</taxon>
    </lineage>
</organism>
<feature type="chain" id="PRO_0000103906" description="Uncharacterized protein Mb1862">
    <location>
        <begin position="1"/>
        <end position="85"/>
    </location>
</feature>
<keyword id="KW-1185">Reference proteome</keyword>
<sequence length="85" mass="9696">MRLCVCSAVDWTTHRSSAGEFCGCQLRTPKEQYLSVNLSGTRTARDYDASGKRWRPLAVLTRRWGKAIHLTVDRVAESLRRLACR</sequence>
<proteinExistence type="predicted"/>
<reference key="1">
    <citation type="journal article" date="2003" name="Proc. Natl. Acad. Sci. U.S.A.">
        <title>The complete genome sequence of Mycobacterium bovis.</title>
        <authorList>
            <person name="Garnier T."/>
            <person name="Eiglmeier K."/>
            <person name="Camus J.-C."/>
            <person name="Medina N."/>
            <person name="Mansoor H."/>
            <person name="Pryor M."/>
            <person name="Duthoy S."/>
            <person name="Grondin S."/>
            <person name="Lacroix C."/>
            <person name="Monsempe C."/>
            <person name="Simon S."/>
            <person name="Harris B."/>
            <person name="Atkin R."/>
            <person name="Doggett J."/>
            <person name="Mayes R."/>
            <person name="Keating L."/>
            <person name="Wheeler P.R."/>
            <person name="Parkhill J."/>
            <person name="Barrell B.G."/>
            <person name="Cole S.T."/>
            <person name="Gordon S.V."/>
            <person name="Hewinson R.G."/>
        </authorList>
    </citation>
    <scope>NUCLEOTIDE SEQUENCE [LARGE SCALE GENOMIC DNA]</scope>
    <source>
        <strain>ATCC BAA-935 / AF2122/97</strain>
    </source>
</reference>
<reference key="2">
    <citation type="journal article" date="2017" name="Genome Announc.">
        <title>Updated reference genome sequence and annotation of Mycobacterium bovis AF2122/97.</title>
        <authorList>
            <person name="Malone K.M."/>
            <person name="Farrell D."/>
            <person name="Stuber T.P."/>
            <person name="Schubert O.T."/>
            <person name="Aebersold R."/>
            <person name="Robbe-Austerman S."/>
            <person name="Gordon S.V."/>
        </authorList>
    </citation>
    <scope>NUCLEOTIDE SEQUENCE [LARGE SCALE GENOMIC DNA]</scope>
    <scope>GENOME REANNOTATION</scope>
    <source>
        <strain>ATCC BAA-935 / AF2122/97</strain>
    </source>
</reference>
<protein>
    <recommendedName>
        <fullName>Uncharacterized protein Mb1862</fullName>
    </recommendedName>
</protein>
<name>Y1862_MYCBO</name>
<dbReference type="EMBL" id="LT708304">
    <property type="protein sequence ID" value="SIU00466.1"/>
    <property type="molecule type" value="Genomic_DNA"/>
</dbReference>
<dbReference type="RefSeq" id="NP_855514.1">
    <property type="nucleotide sequence ID" value="NC_002945.3"/>
</dbReference>
<dbReference type="KEGG" id="mbo:BQ2027_MB1862"/>
<dbReference type="Proteomes" id="UP000001419">
    <property type="component" value="Chromosome"/>
</dbReference>
<accession>P64900</accession>
<accession>A0A1R3XZH3</accession>
<accession>Q50602</accession>
<accession>X2BJ45</accession>